<protein>
    <recommendedName>
        <fullName evidence="1">Large ribosomal subunit protein bL12</fullName>
    </recommendedName>
    <alternativeName>
        <fullName evidence="2">50S ribosomal protein L7/L12</fullName>
    </alternativeName>
</protein>
<name>RL7_LEUMM</name>
<feature type="chain" id="PRO_1000007034" description="Large ribosomal subunit protein bL12">
    <location>
        <begin position="1"/>
        <end position="121"/>
    </location>
</feature>
<evidence type="ECO:0000255" key="1">
    <source>
        <dbReference type="HAMAP-Rule" id="MF_00368"/>
    </source>
</evidence>
<evidence type="ECO:0000305" key="2"/>
<gene>
    <name evidence="1" type="primary">rplL</name>
    <name type="ordered locus">LEUM_0272</name>
</gene>
<sequence>MAFDKDAIIASLKDATILDLADLVSAIEEEFNVSAAAPVAAAGAADGAAAAKSEFDVELTSAGTAKVKVIKAVREATGLGLKEAKDLVDNAPSVVKEGLSEDDANALKESLEATGASVTVK</sequence>
<accession>Q03ZH3</accession>
<organism>
    <name type="scientific">Leuconostoc mesenteroides subsp. mesenteroides (strain ATCC 8293 / DSM 20343 / BCRC 11652 / CCM 1803 / JCM 6124 / NCDO 523 / NBRC 100496 / NCIMB 8023 / NCTC 12954 / NRRL B-1118 / 37Y)</name>
    <dbReference type="NCBI Taxonomy" id="203120"/>
    <lineage>
        <taxon>Bacteria</taxon>
        <taxon>Bacillati</taxon>
        <taxon>Bacillota</taxon>
        <taxon>Bacilli</taxon>
        <taxon>Lactobacillales</taxon>
        <taxon>Lactobacillaceae</taxon>
        <taxon>Leuconostoc</taxon>
    </lineage>
</organism>
<keyword id="KW-1185">Reference proteome</keyword>
<keyword id="KW-0687">Ribonucleoprotein</keyword>
<keyword id="KW-0689">Ribosomal protein</keyword>
<proteinExistence type="inferred from homology"/>
<dbReference type="EMBL" id="CP000414">
    <property type="protein sequence ID" value="ABJ61399.1"/>
    <property type="molecule type" value="Genomic_DNA"/>
</dbReference>
<dbReference type="RefSeq" id="WP_002815934.1">
    <property type="nucleotide sequence ID" value="NC_008531.1"/>
</dbReference>
<dbReference type="SMR" id="Q03ZH3"/>
<dbReference type="EnsemblBacteria" id="ABJ61399">
    <property type="protein sequence ID" value="ABJ61399"/>
    <property type="gene ID" value="LEUM_0272"/>
</dbReference>
<dbReference type="GeneID" id="97504904"/>
<dbReference type="KEGG" id="lme:LEUM_0272"/>
<dbReference type="eggNOG" id="COG0222">
    <property type="taxonomic scope" value="Bacteria"/>
</dbReference>
<dbReference type="HOGENOM" id="CLU_086499_3_2_9"/>
<dbReference type="Proteomes" id="UP000000362">
    <property type="component" value="Chromosome"/>
</dbReference>
<dbReference type="GO" id="GO:0022625">
    <property type="term" value="C:cytosolic large ribosomal subunit"/>
    <property type="evidence" value="ECO:0007669"/>
    <property type="project" value="TreeGrafter"/>
</dbReference>
<dbReference type="GO" id="GO:0003729">
    <property type="term" value="F:mRNA binding"/>
    <property type="evidence" value="ECO:0007669"/>
    <property type="project" value="TreeGrafter"/>
</dbReference>
<dbReference type="GO" id="GO:0003735">
    <property type="term" value="F:structural constituent of ribosome"/>
    <property type="evidence" value="ECO:0007669"/>
    <property type="project" value="InterPro"/>
</dbReference>
<dbReference type="GO" id="GO:0006412">
    <property type="term" value="P:translation"/>
    <property type="evidence" value="ECO:0007669"/>
    <property type="project" value="UniProtKB-UniRule"/>
</dbReference>
<dbReference type="CDD" id="cd00387">
    <property type="entry name" value="Ribosomal_L7_L12"/>
    <property type="match status" value="1"/>
</dbReference>
<dbReference type="FunFam" id="3.30.1390.10:FF:000001">
    <property type="entry name" value="50S ribosomal protein L7/L12"/>
    <property type="match status" value="1"/>
</dbReference>
<dbReference type="Gene3D" id="3.30.1390.10">
    <property type="match status" value="1"/>
</dbReference>
<dbReference type="Gene3D" id="1.20.5.710">
    <property type="entry name" value="Single helix bin"/>
    <property type="match status" value="1"/>
</dbReference>
<dbReference type="HAMAP" id="MF_00368">
    <property type="entry name" value="Ribosomal_bL12"/>
    <property type="match status" value="1"/>
</dbReference>
<dbReference type="InterPro" id="IPR000206">
    <property type="entry name" value="Ribosomal_bL12"/>
</dbReference>
<dbReference type="InterPro" id="IPR013823">
    <property type="entry name" value="Ribosomal_bL12_C"/>
</dbReference>
<dbReference type="InterPro" id="IPR014719">
    <property type="entry name" value="Ribosomal_bL12_C/ClpS-like"/>
</dbReference>
<dbReference type="InterPro" id="IPR008932">
    <property type="entry name" value="Ribosomal_bL12_oligo"/>
</dbReference>
<dbReference type="InterPro" id="IPR036235">
    <property type="entry name" value="Ribosomal_bL12_oligo_N_sf"/>
</dbReference>
<dbReference type="NCBIfam" id="TIGR00855">
    <property type="entry name" value="L12"/>
    <property type="match status" value="1"/>
</dbReference>
<dbReference type="PANTHER" id="PTHR45987">
    <property type="entry name" value="39S RIBOSOMAL PROTEIN L12"/>
    <property type="match status" value="1"/>
</dbReference>
<dbReference type="PANTHER" id="PTHR45987:SF4">
    <property type="entry name" value="LARGE RIBOSOMAL SUBUNIT PROTEIN BL12M"/>
    <property type="match status" value="1"/>
</dbReference>
<dbReference type="Pfam" id="PF00542">
    <property type="entry name" value="Ribosomal_L12"/>
    <property type="match status" value="1"/>
</dbReference>
<dbReference type="Pfam" id="PF16320">
    <property type="entry name" value="Ribosomal_L12_N"/>
    <property type="match status" value="1"/>
</dbReference>
<dbReference type="SUPFAM" id="SSF54736">
    <property type="entry name" value="ClpS-like"/>
    <property type="match status" value="1"/>
</dbReference>
<dbReference type="SUPFAM" id="SSF48300">
    <property type="entry name" value="Ribosomal protein L7/12, oligomerisation (N-terminal) domain"/>
    <property type="match status" value="1"/>
</dbReference>
<comment type="function">
    <text evidence="1">Forms part of the ribosomal stalk which helps the ribosome interact with GTP-bound translation factors. Is thus essential for accurate translation.</text>
</comment>
<comment type="subunit">
    <text evidence="1">Homodimer. Part of the ribosomal stalk of the 50S ribosomal subunit. Forms a multimeric L10(L12)X complex, where L10 forms an elongated spine to which 2 to 4 L12 dimers bind in a sequential fashion. Binds GTP-bound translation factors.</text>
</comment>
<comment type="similarity">
    <text evidence="1">Belongs to the bacterial ribosomal protein bL12 family.</text>
</comment>
<reference key="1">
    <citation type="journal article" date="2006" name="Proc. Natl. Acad. Sci. U.S.A.">
        <title>Comparative genomics of the lactic acid bacteria.</title>
        <authorList>
            <person name="Makarova K.S."/>
            <person name="Slesarev A."/>
            <person name="Wolf Y.I."/>
            <person name="Sorokin A."/>
            <person name="Mirkin B."/>
            <person name="Koonin E.V."/>
            <person name="Pavlov A."/>
            <person name="Pavlova N."/>
            <person name="Karamychev V."/>
            <person name="Polouchine N."/>
            <person name="Shakhova V."/>
            <person name="Grigoriev I."/>
            <person name="Lou Y."/>
            <person name="Rohksar D."/>
            <person name="Lucas S."/>
            <person name="Huang K."/>
            <person name="Goodstein D.M."/>
            <person name="Hawkins T."/>
            <person name="Plengvidhya V."/>
            <person name="Welker D."/>
            <person name="Hughes J."/>
            <person name="Goh Y."/>
            <person name="Benson A."/>
            <person name="Baldwin K."/>
            <person name="Lee J.-H."/>
            <person name="Diaz-Muniz I."/>
            <person name="Dosti B."/>
            <person name="Smeianov V."/>
            <person name="Wechter W."/>
            <person name="Barabote R."/>
            <person name="Lorca G."/>
            <person name="Altermann E."/>
            <person name="Barrangou R."/>
            <person name="Ganesan B."/>
            <person name="Xie Y."/>
            <person name="Rawsthorne H."/>
            <person name="Tamir D."/>
            <person name="Parker C."/>
            <person name="Breidt F."/>
            <person name="Broadbent J.R."/>
            <person name="Hutkins R."/>
            <person name="O'Sullivan D."/>
            <person name="Steele J."/>
            <person name="Unlu G."/>
            <person name="Saier M.H. Jr."/>
            <person name="Klaenhammer T."/>
            <person name="Richardson P."/>
            <person name="Kozyavkin S."/>
            <person name="Weimer B.C."/>
            <person name="Mills D.A."/>
        </authorList>
    </citation>
    <scope>NUCLEOTIDE SEQUENCE [LARGE SCALE GENOMIC DNA]</scope>
    <source>
        <strain>ATCC 8293 / DSM 20343 / BCRC 11652 / CCM 1803 / JCM 6124 / NCDO 523 / NBRC 100496 / NCIMB 8023 / NCTC 12954 / NRRL B-1118 / 37Y</strain>
    </source>
</reference>